<gene>
    <name evidence="1" type="primary">rnhB</name>
    <name type="ordered locus">BAV1748</name>
</gene>
<comment type="function">
    <text evidence="1">Endonuclease that specifically degrades the RNA of RNA-DNA hybrids.</text>
</comment>
<comment type="catalytic activity">
    <reaction evidence="1">
        <text>Endonucleolytic cleavage to 5'-phosphomonoester.</text>
        <dbReference type="EC" id="3.1.26.4"/>
    </reaction>
</comment>
<comment type="cofactor">
    <cofactor evidence="1">
        <name>Mn(2+)</name>
        <dbReference type="ChEBI" id="CHEBI:29035"/>
    </cofactor>
    <cofactor evidence="1">
        <name>Mg(2+)</name>
        <dbReference type="ChEBI" id="CHEBI:18420"/>
    </cofactor>
    <text evidence="1">Manganese or magnesium. Binds 1 divalent metal ion per monomer in the absence of substrate. May bind a second metal ion after substrate binding.</text>
</comment>
<comment type="subcellular location">
    <subcellularLocation>
        <location evidence="1">Cytoplasm</location>
    </subcellularLocation>
</comment>
<comment type="similarity">
    <text evidence="1">Belongs to the RNase HII family.</text>
</comment>
<keyword id="KW-0963">Cytoplasm</keyword>
<keyword id="KW-0255">Endonuclease</keyword>
<keyword id="KW-0378">Hydrolase</keyword>
<keyword id="KW-0464">Manganese</keyword>
<keyword id="KW-0479">Metal-binding</keyword>
<keyword id="KW-0540">Nuclease</keyword>
<keyword id="KW-1185">Reference proteome</keyword>
<reference key="1">
    <citation type="journal article" date="2006" name="J. Bacteriol.">
        <title>Comparison of the genome sequence of the poultry pathogen Bordetella avium with those of B. bronchiseptica, B. pertussis, and B. parapertussis reveals extensive diversity in surface structures associated with host interaction.</title>
        <authorList>
            <person name="Sebaihia M."/>
            <person name="Preston A."/>
            <person name="Maskell D.J."/>
            <person name="Kuzmiak H."/>
            <person name="Connell T.D."/>
            <person name="King N.D."/>
            <person name="Orndorff P.E."/>
            <person name="Miyamoto D.M."/>
            <person name="Thomson N.R."/>
            <person name="Harris D."/>
            <person name="Goble A."/>
            <person name="Lord A."/>
            <person name="Murphy L."/>
            <person name="Quail M.A."/>
            <person name="Rutter S."/>
            <person name="Squares R."/>
            <person name="Squares S."/>
            <person name="Woodward J."/>
            <person name="Parkhill J."/>
            <person name="Temple L.M."/>
        </authorList>
    </citation>
    <scope>NUCLEOTIDE SEQUENCE [LARGE SCALE GENOMIC DNA]</scope>
    <source>
        <strain>197N</strain>
    </source>
</reference>
<evidence type="ECO:0000255" key="1">
    <source>
        <dbReference type="HAMAP-Rule" id="MF_00052"/>
    </source>
</evidence>
<evidence type="ECO:0000255" key="2">
    <source>
        <dbReference type="PROSITE-ProRule" id="PRU01319"/>
    </source>
</evidence>
<protein>
    <recommendedName>
        <fullName evidence="1">Ribonuclease HII</fullName>
        <shortName evidence="1">RNase HII</shortName>
        <ecNumber evidence="1">3.1.26.4</ecNumber>
    </recommendedName>
</protein>
<name>RNH2_BORA1</name>
<dbReference type="EC" id="3.1.26.4" evidence="1"/>
<dbReference type="EMBL" id="AM167904">
    <property type="protein sequence ID" value="CAJ49356.1"/>
    <property type="molecule type" value="Genomic_DNA"/>
</dbReference>
<dbReference type="RefSeq" id="WP_012417417.1">
    <property type="nucleotide sequence ID" value="NC_010645.1"/>
</dbReference>
<dbReference type="SMR" id="Q2L146"/>
<dbReference type="STRING" id="360910.BAV1748"/>
<dbReference type="GeneID" id="92935191"/>
<dbReference type="KEGG" id="bav:BAV1748"/>
<dbReference type="eggNOG" id="COG0164">
    <property type="taxonomic scope" value="Bacteria"/>
</dbReference>
<dbReference type="HOGENOM" id="CLU_036532_3_2_4"/>
<dbReference type="OrthoDB" id="9803420at2"/>
<dbReference type="Proteomes" id="UP000001977">
    <property type="component" value="Chromosome"/>
</dbReference>
<dbReference type="GO" id="GO:0005737">
    <property type="term" value="C:cytoplasm"/>
    <property type="evidence" value="ECO:0007669"/>
    <property type="project" value="UniProtKB-SubCell"/>
</dbReference>
<dbReference type="GO" id="GO:0032299">
    <property type="term" value="C:ribonuclease H2 complex"/>
    <property type="evidence" value="ECO:0007669"/>
    <property type="project" value="TreeGrafter"/>
</dbReference>
<dbReference type="GO" id="GO:0030145">
    <property type="term" value="F:manganese ion binding"/>
    <property type="evidence" value="ECO:0007669"/>
    <property type="project" value="UniProtKB-UniRule"/>
</dbReference>
<dbReference type="GO" id="GO:0003723">
    <property type="term" value="F:RNA binding"/>
    <property type="evidence" value="ECO:0007669"/>
    <property type="project" value="InterPro"/>
</dbReference>
<dbReference type="GO" id="GO:0004523">
    <property type="term" value="F:RNA-DNA hybrid ribonuclease activity"/>
    <property type="evidence" value="ECO:0007669"/>
    <property type="project" value="UniProtKB-UniRule"/>
</dbReference>
<dbReference type="GO" id="GO:0043137">
    <property type="term" value="P:DNA replication, removal of RNA primer"/>
    <property type="evidence" value="ECO:0007669"/>
    <property type="project" value="TreeGrafter"/>
</dbReference>
<dbReference type="GO" id="GO:0006298">
    <property type="term" value="P:mismatch repair"/>
    <property type="evidence" value="ECO:0007669"/>
    <property type="project" value="TreeGrafter"/>
</dbReference>
<dbReference type="CDD" id="cd07182">
    <property type="entry name" value="RNase_HII_bacteria_HII_like"/>
    <property type="match status" value="1"/>
</dbReference>
<dbReference type="FunFam" id="3.30.420.10:FF:000006">
    <property type="entry name" value="Ribonuclease HII"/>
    <property type="match status" value="1"/>
</dbReference>
<dbReference type="Gene3D" id="3.30.420.10">
    <property type="entry name" value="Ribonuclease H-like superfamily/Ribonuclease H"/>
    <property type="match status" value="1"/>
</dbReference>
<dbReference type="HAMAP" id="MF_00052_B">
    <property type="entry name" value="RNase_HII_B"/>
    <property type="match status" value="1"/>
</dbReference>
<dbReference type="InterPro" id="IPR022898">
    <property type="entry name" value="RNase_HII"/>
</dbReference>
<dbReference type="InterPro" id="IPR001352">
    <property type="entry name" value="RNase_HII/HIII"/>
</dbReference>
<dbReference type="InterPro" id="IPR024567">
    <property type="entry name" value="RNase_HII/HIII_dom"/>
</dbReference>
<dbReference type="InterPro" id="IPR012337">
    <property type="entry name" value="RNaseH-like_sf"/>
</dbReference>
<dbReference type="InterPro" id="IPR036397">
    <property type="entry name" value="RNaseH_sf"/>
</dbReference>
<dbReference type="NCBIfam" id="NF000595">
    <property type="entry name" value="PRK00015.1-3"/>
    <property type="match status" value="1"/>
</dbReference>
<dbReference type="NCBIfam" id="NF000596">
    <property type="entry name" value="PRK00015.1-4"/>
    <property type="match status" value="1"/>
</dbReference>
<dbReference type="PANTHER" id="PTHR10954">
    <property type="entry name" value="RIBONUCLEASE H2 SUBUNIT A"/>
    <property type="match status" value="1"/>
</dbReference>
<dbReference type="PANTHER" id="PTHR10954:SF18">
    <property type="entry name" value="RIBONUCLEASE HII"/>
    <property type="match status" value="1"/>
</dbReference>
<dbReference type="Pfam" id="PF01351">
    <property type="entry name" value="RNase_HII"/>
    <property type="match status" value="1"/>
</dbReference>
<dbReference type="SUPFAM" id="SSF53098">
    <property type="entry name" value="Ribonuclease H-like"/>
    <property type="match status" value="1"/>
</dbReference>
<dbReference type="PROSITE" id="PS51975">
    <property type="entry name" value="RNASE_H_2"/>
    <property type="match status" value="1"/>
</dbReference>
<proteinExistence type="inferred from homology"/>
<feature type="chain" id="PRO_0000235703" description="Ribonuclease HII">
    <location>
        <begin position="1"/>
        <end position="202"/>
    </location>
</feature>
<feature type="domain" description="RNase H type-2" evidence="2">
    <location>
        <begin position="15"/>
        <end position="202"/>
    </location>
</feature>
<feature type="binding site" evidence="1">
    <location>
        <position position="21"/>
    </location>
    <ligand>
        <name>a divalent metal cation</name>
        <dbReference type="ChEBI" id="CHEBI:60240"/>
    </ligand>
</feature>
<feature type="binding site" evidence="1">
    <location>
        <position position="22"/>
    </location>
    <ligand>
        <name>a divalent metal cation</name>
        <dbReference type="ChEBI" id="CHEBI:60240"/>
    </ligand>
</feature>
<feature type="binding site" evidence="1">
    <location>
        <position position="113"/>
    </location>
    <ligand>
        <name>a divalent metal cation</name>
        <dbReference type="ChEBI" id="CHEBI:60240"/>
    </ligand>
</feature>
<accession>Q2L146</accession>
<sequence length="202" mass="21601">MAQADLFGDAAYPDQGVAGVDEAGRGPLAGAVYAAAVILDPQRPIDGLADSKVLKAERRERLAEQIKAQALSWCIACASTDEIDSMNILRATLLAMQRAVEGLNQLPSLALVDGNQAPRLRCAVQTIIKGDALVPAISAASILAKTARDAELQRLHALYPQYGFDQHKGYGTALHLARLREYGPCPEHRRSFAPIKAFGISA</sequence>
<organism>
    <name type="scientific">Bordetella avium (strain 197N)</name>
    <dbReference type="NCBI Taxonomy" id="360910"/>
    <lineage>
        <taxon>Bacteria</taxon>
        <taxon>Pseudomonadati</taxon>
        <taxon>Pseudomonadota</taxon>
        <taxon>Betaproteobacteria</taxon>
        <taxon>Burkholderiales</taxon>
        <taxon>Alcaligenaceae</taxon>
        <taxon>Bordetella</taxon>
    </lineage>
</organism>